<gene>
    <name evidence="1" type="primary">sucA</name>
    <name evidence="1" type="synonym">odhA</name>
    <name type="ordered locus">BMEA_A1980</name>
</gene>
<protein>
    <recommendedName>
        <fullName evidence="1">2-oxoglutarate dehydrogenase E1 component</fullName>
        <ecNumber evidence="1">1.2.4.2</ecNumber>
    </recommendedName>
    <alternativeName>
        <fullName evidence="1">Alpha-ketoglutarate dehydrogenase</fullName>
    </alternativeName>
</protein>
<feature type="chain" id="PRO_1000164360" description="2-oxoglutarate dehydrogenase E1 component">
    <location>
        <begin position="1"/>
        <end position="1004"/>
    </location>
</feature>
<evidence type="ECO:0000255" key="1">
    <source>
        <dbReference type="HAMAP-Rule" id="MF_01169"/>
    </source>
</evidence>
<organism>
    <name type="scientific">Brucella melitensis biotype 2 (strain ATCC 23457)</name>
    <dbReference type="NCBI Taxonomy" id="546272"/>
    <lineage>
        <taxon>Bacteria</taxon>
        <taxon>Pseudomonadati</taxon>
        <taxon>Pseudomonadota</taxon>
        <taxon>Alphaproteobacteria</taxon>
        <taxon>Hyphomicrobiales</taxon>
        <taxon>Brucellaceae</taxon>
        <taxon>Brucella/Ochrobactrum group</taxon>
        <taxon>Brucella</taxon>
    </lineage>
</organism>
<name>ODO1_BRUMB</name>
<reference key="1">
    <citation type="submission" date="2009-03" db="EMBL/GenBank/DDBJ databases">
        <title>Brucella melitensis ATCC 23457 whole genome shotgun sequencing project.</title>
        <authorList>
            <person name="Setubal J.C."/>
            <person name="Boyle S."/>
            <person name="Crasta O.R."/>
            <person name="Gillespie J.J."/>
            <person name="Kenyon R.W."/>
            <person name="Lu J."/>
            <person name="Mane S."/>
            <person name="Nagrani S."/>
            <person name="Shallom J.M."/>
            <person name="Shallom S."/>
            <person name="Shukla M."/>
            <person name="Snyder E.E."/>
            <person name="Sobral B.W."/>
            <person name="Wattam A.R."/>
            <person name="Will R."/>
            <person name="Williams K."/>
            <person name="Yoo H."/>
            <person name="Munk C."/>
            <person name="Tapia R."/>
            <person name="Han C."/>
            <person name="Detter J.C."/>
            <person name="Bruce D."/>
            <person name="Brettin T.S."/>
        </authorList>
    </citation>
    <scope>NUCLEOTIDE SEQUENCE [LARGE SCALE GENOMIC DNA]</scope>
    <source>
        <strain>ATCC 23457</strain>
    </source>
</reference>
<keyword id="KW-0324">Glycolysis</keyword>
<keyword id="KW-0560">Oxidoreductase</keyword>
<keyword id="KW-0786">Thiamine pyrophosphate</keyword>
<sequence>MAKQEQAPDRANDVFALTSFLYGGNADYIEELYAKYEDDPNSVDPQWRDFFAKLGDNADDVKKNAEGPSWTRKNWPIAANGELVSALDGNWAEVEKHVTDKLKGKAAKGEAKGAAGTPLTAEEITQAARDSVRAIMMIRAYRMRGHLHANLDPLGLAEKPNDYNELEPENYGFTPADYNRKIFIDNVLGLEYATVPEMLDILKRTYCGAIGVEFMHISDPAEKAWIQERIEGPDKKVAFTPEGKKAILSKLIEAEGFEQFIDVKYKGTKRFGLDGGESLIPALEQIVKRGGQMGLKEVVLGMAHRGRLNVLSQVMGKPHRAIFHEFKGGSYTPDDVEGSGDVKYHLGASSDREFDGNKVHLSLTANPSHLEIVNPVVMGKARAKQDLLVGRTRDDMVPLSERAKVLPLLLHGDAAFAGQGVVAECLGLSGLKGHRVAGTLHFIINNQIGFTTNPAFSRSSPYPSDVAKMIEAPIFHVNGDDPEAVVFAAKVATEFRMTFHKPVVIDMFCYRRFGHNEGDEPSFTQPLMYKAIRAHKTTVQLYGEKLIAEGLVTQDDIDRMKADWRQKLEGEFEAGQSYKPNKADWLDGAWAGLRTADNADEQRRGKTAVPVKTLKEIGKKLVEVPKDFHVHRTIQRFLDNRAKMMETGEGIDWATAESLAFGSLAVEAHPIRLSGQDVERGTFSQRHTVLYDQENQNRYIPLNNLQKGQAIYEAINSMLSEEAVLGYEYGYSLSDPRALVLWEAQFGDFANGAQVVFDQFISSGERKWLRMSGLVCLLPHGFEGQGPEHSSARLERYLQLCAEDNMQVANVTTPANYFHILRRQMKRDFRKPLIMMTPKSLLRHKRAISTLAELSGESSFHRLLWDDAQYNKDEGIKLQKDAKIRRVVLCSGKVYYDLYEEREKRGIDDVYLLRVEQLYPFPAKALINELSRFRHAEMVWCQEEPKNMGAWSFIDPYLEWVLAHIDAKHQRVRYAGRPAAASPATGLMSKHLAQLAAFLEDALG</sequence>
<dbReference type="EC" id="1.2.4.2" evidence="1"/>
<dbReference type="EMBL" id="CP001488">
    <property type="protein sequence ID" value="ACO01640.1"/>
    <property type="molecule type" value="Genomic_DNA"/>
</dbReference>
<dbReference type="RefSeq" id="WP_004684456.1">
    <property type="nucleotide sequence ID" value="NC_012441.1"/>
</dbReference>
<dbReference type="SMR" id="C0RFG8"/>
<dbReference type="KEGG" id="bmi:BMEA_A1980"/>
<dbReference type="HOGENOM" id="CLU_004709_1_0_5"/>
<dbReference type="Proteomes" id="UP000001748">
    <property type="component" value="Chromosome I"/>
</dbReference>
<dbReference type="GO" id="GO:0005829">
    <property type="term" value="C:cytosol"/>
    <property type="evidence" value="ECO:0007669"/>
    <property type="project" value="TreeGrafter"/>
</dbReference>
<dbReference type="GO" id="GO:0045252">
    <property type="term" value="C:oxoglutarate dehydrogenase complex"/>
    <property type="evidence" value="ECO:0007669"/>
    <property type="project" value="TreeGrafter"/>
</dbReference>
<dbReference type="GO" id="GO:0004591">
    <property type="term" value="F:oxoglutarate dehydrogenase (succinyl-transferring) activity"/>
    <property type="evidence" value="ECO:0007669"/>
    <property type="project" value="UniProtKB-UniRule"/>
</dbReference>
<dbReference type="GO" id="GO:0030976">
    <property type="term" value="F:thiamine pyrophosphate binding"/>
    <property type="evidence" value="ECO:0007669"/>
    <property type="project" value="UniProtKB-UniRule"/>
</dbReference>
<dbReference type="GO" id="GO:0006096">
    <property type="term" value="P:glycolytic process"/>
    <property type="evidence" value="ECO:0007669"/>
    <property type="project" value="UniProtKB-UniRule"/>
</dbReference>
<dbReference type="GO" id="GO:0006099">
    <property type="term" value="P:tricarboxylic acid cycle"/>
    <property type="evidence" value="ECO:0007669"/>
    <property type="project" value="TreeGrafter"/>
</dbReference>
<dbReference type="CDD" id="cd02016">
    <property type="entry name" value="TPP_E1_OGDC_like"/>
    <property type="match status" value="1"/>
</dbReference>
<dbReference type="FunFam" id="3.40.50.12470:FF:000003">
    <property type="entry name" value="2-oxoglutarate dehydrogenase E1 component"/>
    <property type="match status" value="1"/>
</dbReference>
<dbReference type="Gene3D" id="3.40.50.12470">
    <property type="match status" value="1"/>
</dbReference>
<dbReference type="Gene3D" id="3.40.50.970">
    <property type="match status" value="1"/>
</dbReference>
<dbReference type="Gene3D" id="3.40.50.11610">
    <property type="entry name" value="Multifunctional 2-oxoglutarate metabolism enzyme, C-terminal domain"/>
    <property type="match status" value="1"/>
</dbReference>
<dbReference type="Gene3D" id="1.10.287.1150">
    <property type="entry name" value="TPP helical domain"/>
    <property type="match status" value="1"/>
</dbReference>
<dbReference type="HAMAP" id="MF_01169">
    <property type="entry name" value="SucA_OdhA"/>
    <property type="match status" value="1"/>
</dbReference>
<dbReference type="InterPro" id="IPR032106">
    <property type="entry name" value="2-oxogl_dehyd_N"/>
</dbReference>
<dbReference type="InterPro" id="IPR011603">
    <property type="entry name" value="2oxoglutarate_DH_E1"/>
</dbReference>
<dbReference type="InterPro" id="IPR023784">
    <property type="entry name" value="2oxoglutarate_DH_E1_bac"/>
</dbReference>
<dbReference type="InterPro" id="IPR001017">
    <property type="entry name" value="DH_E1"/>
</dbReference>
<dbReference type="InterPro" id="IPR042179">
    <property type="entry name" value="KGD_C_sf"/>
</dbReference>
<dbReference type="InterPro" id="IPR031717">
    <property type="entry name" value="ODO-1/KGD_C"/>
</dbReference>
<dbReference type="InterPro" id="IPR029061">
    <property type="entry name" value="THDP-binding"/>
</dbReference>
<dbReference type="InterPro" id="IPR005475">
    <property type="entry name" value="Transketolase-like_Pyr-bd"/>
</dbReference>
<dbReference type="NCBIfam" id="TIGR00239">
    <property type="entry name" value="2oxo_dh_E1"/>
    <property type="match status" value="1"/>
</dbReference>
<dbReference type="NCBIfam" id="NF006914">
    <property type="entry name" value="PRK09404.1"/>
    <property type="match status" value="1"/>
</dbReference>
<dbReference type="NCBIfam" id="NF008907">
    <property type="entry name" value="PRK12270.1"/>
    <property type="match status" value="1"/>
</dbReference>
<dbReference type="PANTHER" id="PTHR23152:SF4">
    <property type="entry name" value="2-OXOADIPATE DEHYDROGENASE COMPLEX COMPONENT E1"/>
    <property type="match status" value="1"/>
</dbReference>
<dbReference type="PANTHER" id="PTHR23152">
    <property type="entry name" value="2-OXOGLUTARATE DEHYDROGENASE"/>
    <property type="match status" value="1"/>
</dbReference>
<dbReference type="Pfam" id="PF16078">
    <property type="entry name" value="2-oxogl_dehyd_N"/>
    <property type="match status" value="1"/>
</dbReference>
<dbReference type="Pfam" id="PF00676">
    <property type="entry name" value="E1_dh"/>
    <property type="match status" value="1"/>
</dbReference>
<dbReference type="Pfam" id="PF16870">
    <property type="entry name" value="OxoGdeHyase_C"/>
    <property type="match status" value="1"/>
</dbReference>
<dbReference type="Pfam" id="PF02779">
    <property type="entry name" value="Transket_pyr"/>
    <property type="match status" value="1"/>
</dbReference>
<dbReference type="PIRSF" id="PIRSF000157">
    <property type="entry name" value="Oxoglu_dh_E1"/>
    <property type="match status" value="1"/>
</dbReference>
<dbReference type="SMART" id="SM00861">
    <property type="entry name" value="Transket_pyr"/>
    <property type="match status" value="1"/>
</dbReference>
<dbReference type="SUPFAM" id="SSF52518">
    <property type="entry name" value="Thiamin diphosphate-binding fold (THDP-binding)"/>
    <property type="match status" value="2"/>
</dbReference>
<comment type="function">
    <text evidence="1">E1 component of the 2-oxoglutarate dehydrogenase (OGDH) complex which catalyzes the decarboxylation of 2-oxoglutarate, the first step in the conversion of 2-oxoglutarate to succinyl-CoA and CO(2).</text>
</comment>
<comment type="catalytic activity">
    <reaction evidence="1">
        <text>N(6)-[(R)-lipoyl]-L-lysyl-[protein] + 2-oxoglutarate + H(+) = N(6)-[(R)-S(8)-succinyldihydrolipoyl]-L-lysyl-[protein] + CO2</text>
        <dbReference type="Rhea" id="RHEA:12188"/>
        <dbReference type="Rhea" id="RHEA-COMP:10474"/>
        <dbReference type="Rhea" id="RHEA-COMP:20092"/>
        <dbReference type="ChEBI" id="CHEBI:15378"/>
        <dbReference type="ChEBI" id="CHEBI:16526"/>
        <dbReference type="ChEBI" id="CHEBI:16810"/>
        <dbReference type="ChEBI" id="CHEBI:83099"/>
        <dbReference type="ChEBI" id="CHEBI:83120"/>
        <dbReference type="EC" id="1.2.4.2"/>
    </reaction>
</comment>
<comment type="cofactor">
    <cofactor evidence="1">
        <name>thiamine diphosphate</name>
        <dbReference type="ChEBI" id="CHEBI:58937"/>
    </cofactor>
</comment>
<comment type="subunit">
    <text evidence="1">Homodimer. Part of the 2-oxoglutarate dehydrogenase (OGDH) complex composed of E1 (2-oxoglutarate dehydrogenase), E2 (dihydrolipoamide succinyltransferase) and E3 (dihydrolipoamide dehydrogenase); the complex contains multiple copies of the three enzymatic components (E1, E2 and E3).</text>
</comment>
<comment type="similarity">
    <text evidence="1">Belongs to the alpha-ketoglutarate dehydrogenase family.</text>
</comment>
<proteinExistence type="inferred from homology"/>
<accession>C0RFG8</accession>